<comment type="function">
    <text evidence="1">Increases the formation of ribosomal termination complexes and stimulates activities of RF-1 and RF-2. It binds guanine nucleotides and has strong preference for UGA stop codons. It may interact directly with the ribosome. The stimulation of RF-1 and RF-2 is significantly reduced by GTP and GDP, but not by GMP.</text>
</comment>
<comment type="subcellular location">
    <subcellularLocation>
        <location evidence="1">Cytoplasm</location>
    </subcellularLocation>
</comment>
<comment type="similarity">
    <text evidence="1">Belongs to the TRAFAC class translation factor GTPase superfamily. Classic translation factor GTPase family. PrfC subfamily.</text>
</comment>
<feature type="chain" id="PRO_0000242223" description="Peptide chain release factor 3">
    <location>
        <begin position="1"/>
        <end position="543"/>
    </location>
</feature>
<feature type="domain" description="tr-type G">
    <location>
        <begin position="21"/>
        <end position="289"/>
    </location>
</feature>
<feature type="binding site" evidence="1">
    <location>
        <begin position="30"/>
        <end position="37"/>
    </location>
    <ligand>
        <name>GTP</name>
        <dbReference type="ChEBI" id="CHEBI:37565"/>
    </ligand>
</feature>
<feature type="binding site" evidence="1">
    <location>
        <begin position="98"/>
        <end position="102"/>
    </location>
    <ligand>
        <name>GTP</name>
        <dbReference type="ChEBI" id="CHEBI:37565"/>
    </ligand>
</feature>
<feature type="binding site" evidence="1">
    <location>
        <begin position="152"/>
        <end position="155"/>
    </location>
    <ligand>
        <name>GTP</name>
        <dbReference type="ChEBI" id="CHEBI:37565"/>
    </ligand>
</feature>
<proteinExistence type="inferred from homology"/>
<dbReference type="EMBL" id="CP000116">
    <property type="protein sequence ID" value="AAZ96921.1"/>
    <property type="molecule type" value="Genomic_DNA"/>
</dbReference>
<dbReference type="RefSeq" id="WP_011311480.1">
    <property type="nucleotide sequence ID" value="NC_007404.1"/>
</dbReference>
<dbReference type="SMR" id="Q3SK69"/>
<dbReference type="STRING" id="292415.Tbd_0968"/>
<dbReference type="KEGG" id="tbd:Tbd_0968"/>
<dbReference type="eggNOG" id="COG4108">
    <property type="taxonomic scope" value="Bacteria"/>
</dbReference>
<dbReference type="HOGENOM" id="CLU_002794_2_1_4"/>
<dbReference type="OrthoDB" id="9804431at2"/>
<dbReference type="Proteomes" id="UP000008291">
    <property type="component" value="Chromosome"/>
</dbReference>
<dbReference type="GO" id="GO:0005829">
    <property type="term" value="C:cytosol"/>
    <property type="evidence" value="ECO:0007669"/>
    <property type="project" value="TreeGrafter"/>
</dbReference>
<dbReference type="GO" id="GO:0005525">
    <property type="term" value="F:GTP binding"/>
    <property type="evidence" value="ECO:0007669"/>
    <property type="project" value="UniProtKB-UniRule"/>
</dbReference>
<dbReference type="GO" id="GO:0003924">
    <property type="term" value="F:GTPase activity"/>
    <property type="evidence" value="ECO:0007669"/>
    <property type="project" value="InterPro"/>
</dbReference>
<dbReference type="GO" id="GO:0016150">
    <property type="term" value="F:translation release factor activity, codon nonspecific"/>
    <property type="evidence" value="ECO:0007669"/>
    <property type="project" value="TreeGrafter"/>
</dbReference>
<dbReference type="GO" id="GO:0016149">
    <property type="term" value="F:translation release factor activity, codon specific"/>
    <property type="evidence" value="ECO:0007669"/>
    <property type="project" value="UniProtKB-UniRule"/>
</dbReference>
<dbReference type="GO" id="GO:0006449">
    <property type="term" value="P:regulation of translational termination"/>
    <property type="evidence" value="ECO:0007669"/>
    <property type="project" value="UniProtKB-UniRule"/>
</dbReference>
<dbReference type="CDD" id="cd04169">
    <property type="entry name" value="RF3"/>
    <property type="match status" value="1"/>
</dbReference>
<dbReference type="FunFam" id="2.40.30.10:FF:000040">
    <property type="entry name" value="Peptide chain release factor 3"/>
    <property type="match status" value="1"/>
</dbReference>
<dbReference type="FunFam" id="3.30.70.3280:FF:000001">
    <property type="entry name" value="Peptide chain release factor 3"/>
    <property type="match status" value="1"/>
</dbReference>
<dbReference type="FunFam" id="3.40.50.300:FF:000542">
    <property type="entry name" value="Peptide chain release factor 3"/>
    <property type="match status" value="1"/>
</dbReference>
<dbReference type="Gene3D" id="3.40.50.300">
    <property type="entry name" value="P-loop containing nucleotide triphosphate hydrolases"/>
    <property type="match status" value="1"/>
</dbReference>
<dbReference type="Gene3D" id="3.30.70.3280">
    <property type="entry name" value="Peptide chain release factor 3, domain III"/>
    <property type="match status" value="1"/>
</dbReference>
<dbReference type="Gene3D" id="2.40.30.10">
    <property type="entry name" value="Translation factors"/>
    <property type="match status" value="1"/>
</dbReference>
<dbReference type="HAMAP" id="MF_00072">
    <property type="entry name" value="Rel_fac_3"/>
    <property type="match status" value="1"/>
</dbReference>
<dbReference type="InterPro" id="IPR053905">
    <property type="entry name" value="EF-G-like_DII"/>
</dbReference>
<dbReference type="InterPro" id="IPR035647">
    <property type="entry name" value="EFG_III/V"/>
</dbReference>
<dbReference type="InterPro" id="IPR031157">
    <property type="entry name" value="G_TR_CS"/>
</dbReference>
<dbReference type="InterPro" id="IPR027417">
    <property type="entry name" value="P-loop_NTPase"/>
</dbReference>
<dbReference type="InterPro" id="IPR004548">
    <property type="entry name" value="PrfC"/>
</dbReference>
<dbReference type="InterPro" id="IPR032090">
    <property type="entry name" value="RF3_C"/>
</dbReference>
<dbReference type="InterPro" id="IPR038467">
    <property type="entry name" value="RF3_dom_3_sf"/>
</dbReference>
<dbReference type="InterPro" id="IPR041732">
    <property type="entry name" value="RF3_GTP-bd"/>
</dbReference>
<dbReference type="InterPro" id="IPR005225">
    <property type="entry name" value="Small_GTP-bd"/>
</dbReference>
<dbReference type="InterPro" id="IPR000795">
    <property type="entry name" value="T_Tr_GTP-bd_dom"/>
</dbReference>
<dbReference type="InterPro" id="IPR009000">
    <property type="entry name" value="Transl_B-barrel_sf"/>
</dbReference>
<dbReference type="NCBIfam" id="TIGR00503">
    <property type="entry name" value="prfC"/>
    <property type="match status" value="1"/>
</dbReference>
<dbReference type="NCBIfam" id="NF001964">
    <property type="entry name" value="PRK00741.1"/>
    <property type="match status" value="1"/>
</dbReference>
<dbReference type="NCBIfam" id="TIGR00231">
    <property type="entry name" value="small_GTP"/>
    <property type="match status" value="1"/>
</dbReference>
<dbReference type="PANTHER" id="PTHR43556">
    <property type="entry name" value="PEPTIDE CHAIN RELEASE FACTOR RF3"/>
    <property type="match status" value="1"/>
</dbReference>
<dbReference type="PANTHER" id="PTHR43556:SF2">
    <property type="entry name" value="PEPTIDE CHAIN RELEASE FACTOR RF3"/>
    <property type="match status" value="1"/>
</dbReference>
<dbReference type="Pfam" id="PF22042">
    <property type="entry name" value="EF-G_D2"/>
    <property type="match status" value="1"/>
</dbReference>
<dbReference type="Pfam" id="PF00009">
    <property type="entry name" value="GTP_EFTU"/>
    <property type="match status" value="1"/>
</dbReference>
<dbReference type="Pfam" id="PF16658">
    <property type="entry name" value="RF3_C"/>
    <property type="match status" value="1"/>
</dbReference>
<dbReference type="PRINTS" id="PR00315">
    <property type="entry name" value="ELONGATNFCT"/>
</dbReference>
<dbReference type="SUPFAM" id="SSF54980">
    <property type="entry name" value="EF-G C-terminal domain-like"/>
    <property type="match status" value="1"/>
</dbReference>
<dbReference type="SUPFAM" id="SSF52540">
    <property type="entry name" value="P-loop containing nucleoside triphosphate hydrolases"/>
    <property type="match status" value="1"/>
</dbReference>
<dbReference type="SUPFAM" id="SSF50447">
    <property type="entry name" value="Translation proteins"/>
    <property type="match status" value="1"/>
</dbReference>
<dbReference type="PROSITE" id="PS00301">
    <property type="entry name" value="G_TR_1"/>
    <property type="match status" value="1"/>
</dbReference>
<dbReference type="PROSITE" id="PS51722">
    <property type="entry name" value="G_TR_2"/>
    <property type="match status" value="1"/>
</dbReference>
<sequence length="543" mass="60103">MESASPAPAQAGDPALARDVKKRRTFAIISHPDAGKTTLTEKLLLFGGAIQMAGTVKAKKSGKFATSDWMAVEQERGISVASSVMQFSYGDCVFNLLDTPGHKDFSEDTYRVLTAVDAAIMVVDAAKGVEEQTIKLLEVCRLRDTPIITFINKLDREVREPLELLDEIESILKIHCAPVTWPIGMGKRFQGVYHLIHDEILRFKAGEENAGQQFESLQGLGDAKLRELFPLEADALLSEIELVRGAGAAFDLADFLAGRQTPVFFGSGINNFGVREVLRALSDWAPSPLPRDAVERTVEPTEPKFTGFVFKIQANMDPQHRDRIAFFRVCSGRYSPGMKVRHRRTGKDMKIANAVVFMANERQRSDDAVAGDIIGIHNHGQLQIGDTLTEGEALQFKGIPYFAPELFSKPRLRDPLRAKQLNKGLLELGEEGAVQVFEPFADNTLLIGAVGPLQFEIVAHRLKTEYGVDASFENAGIHTARWVTCPDAQHLAEFTKANSLRLAKDVDGNLVYLADTRVNLTLAQERWPKVAFHDTREHGQLLT</sequence>
<evidence type="ECO:0000255" key="1">
    <source>
        <dbReference type="HAMAP-Rule" id="MF_00072"/>
    </source>
</evidence>
<gene>
    <name evidence="1" type="primary">prfC</name>
    <name type="ordered locus">Tbd_0968</name>
</gene>
<name>RF3_THIDA</name>
<accession>Q3SK69</accession>
<reference key="1">
    <citation type="journal article" date="2006" name="J. Bacteriol.">
        <title>The genome sequence of the obligately chemolithoautotrophic, facultatively anaerobic bacterium Thiobacillus denitrificans.</title>
        <authorList>
            <person name="Beller H.R."/>
            <person name="Chain P.S."/>
            <person name="Letain T.E."/>
            <person name="Chakicherla A."/>
            <person name="Larimer F.W."/>
            <person name="Richardson P.M."/>
            <person name="Coleman M.A."/>
            <person name="Wood A.P."/>
            <person name="Kelly D.P."/>
        </authorList>
    </citation>
    <scope>NUCLEOTIDE SEQUENCE [LARGE SCALE GENOMIC DNA]</scope>
    <source>
        <strain>ATCC 25259 / T1</strain>
    </source>
</reference>
<protein>
    <recommendedName>
        <fullName evidence="1">Peptide chain release factor 3</fullName>
        <shortName evidence="1">RF-3</shortName>
    </recommendedName>
</protein>
<keyword id="KW-0963">Cytoplasm</keyword>
<keyword id="KW-0342">GTP-binding</keyword>
<keyword id="KW-0547">Nucleotide-binding</keyword>
<keyword id="KW-0648">Protein biosynthesis</keyword>
<keyword id="KW-1185">Reference proteome</keyword>
<organism>
    <name type="scientific">Thiobacillus denitrificans (strain ATCC 25259 / T1)</name>
    <dbReference type="NCBI Taxonomy" id="292415"/>
    <lineage>
        <taxon>Bacteria</taxon>
        <taxon>Pseudomonadati</taxon>
        <taxon>Pseudomonadota</taxon>
        <taxon>Betaproteobacteria</taxon>
        <taxon>Nitrosomonadales</taxon>
        <taxon>Thiobacillaceae</taxon>
        <taxon>Thiobacillus</taxon>
    </lineage>
</organism>